<accession>Q9UBI9</accession>
<proteinExistence type="evidence at protein level"/>
<keyword id="KW-0217">Developmental protein</keyword>
<keyword id="KW-0597">Phosphoprotein</keyword>
<keyword id="KW-1267">Proteomics identification</keyword>
<keyword id="KW-1185">Reference proteome</keyword>
<reference evidence="4" key="1">
    <citation type="journal article" date="2001" name="DNA Seq.">
        <title>Isolation and characterization of the human gene homologous to the Drosophila headcase (hdc) gene in chromosome bands 6q23-q24, a region of common deletion in human pancreatic cancer.</title>
        <authorList>
            <person name="Makino N."/>
            <person name="Yamato T."/>
            <person name="Inoue H."/>
            <person name="Furukawa T."/>
            <person name="Abe T."/>
            <person name="Yokoyama T."/>
            <person name="Yatsuoka T."/>
            <person name="Fukushige S."/>
            <person name="Orikasa S."/>
            <person name="Takahashi T."/>
            <person name="Horii A."/>
        </authorList>
    </citation>
    <scope>NUCLEOTIDE SEQUENCE [GENOMIC DNA / MRNA]</scope>
    <scope>TISSUE SPECIFICITY</scope>
    <scope>CHROMOSOMAL LOCATION</scope>
</reference>
<reference evidence="4" key="2">
    <citation type="journal article" date="2003" name="Nature">
        <title>The DNA sequence and analysis of human chromosome 6.</title>
        <authorList>
            <person name="Mungall A.J."/>
            <person name="Palmer S.A."/>
            <person name="Sims S.K."/>
            <person name="Edwards C.A."/>
            <person name="Ashurst J.L."/>
            <person name="Wilming L."/>
            <person name="Jones M.C."/>
            <person name="Horton R."/>
            <person name="Hunt S.E."/>
            <person name="Scott C.E."/>
            <person name="Gilbert J.G.R."/>
            <person name="Clamp M.E."/>
            <person name="Bethel G."/>
            <person name="Milne S."/>
            <person name="Ainscough R."/>
            <person name="Almeida J.P."/>
            <person name="Ambrose K.D."/>
            <person name="Andrews T.D."/>
            <person name="Ashwell R.I.S."/>
            <person name="Babbage A.K."/>
            <person name="Bagguley C.L."/>
            <person name="Bailey J."/>
            <person name="Banerjee R."/>
            <person name="Barker D.J."/>
            <person name="Barlow K.F."/>
            <person name="Bates K."/>
            <person name="Beare D.M."/>
            <person name="Beasley H."/>
            <person name="Beasley O."/>
            <person name="Bird C.P."/>
            <person name="Blakey S.E."/>
            <person name="Bray-Allen S."/>
            <person name="Brook J."/>
            <person name="Brown A.J."/>
            <person name="Brown J.Y."/>
            <person name="Burford D.C."/>
            <person name="Burrill W."/>
            <person name="Burton J."/>
            <person name="Carder C."/>
            <person name="Carter N.P."/>
            <person name="Chapman J.C."/>
            <person name="Clark S.Y."/>
            <person name="Clark G."/>
            <person name="Clee C.M."/>
            <person name="Clegg S."/>
            <person name="Cobley V."/>
            <person name="Collier R.E."/>
            <person name="Collins J.E."/>
            <person name="Colman L.K."/>
            <person name="Corby N.R."/>
            <person name="Coville G.J."/>
            <person name="Culley K.M."/>
            <person name="Dhami P."/>
            <person name="Davies J."/>
            <person name="Dunn M."/>
            <person name="Earthrowl M.E."/>
            <person name="Ellington A.E."/>
            <person name="Evans K.A."/>
            <person name="Faulkner L."/>
            <person name="Francis M.D."/>
            <person name="Frankish A."/>
            <person name="Frankland J."/>
            <person name="French L."/>
            <person name="Garner P."/>
            <person name="Garnett J."/>
            <person name="Ghori M.J."/>
            <person name="Gilby L.M."/>
            <person name="Gillson C.J."/>
            <person name="Glithero R.J."/>
            <person name="Grafham D.V."/>
            <person name="Grant M."/>
            <person name="Gribble S."/>
            <person name="Griffiths C."/>
            <person name="Griffiths M.N.D."/>
            <person name="Hall R."/>
            <person name="Halls K.S."/>
            <person name="Hammond S."/>
            <person name="Harley J.L."/>
            <person name="Hart E.A."/>
            <person name="Heath P.D."/>
            <person name="Heathcott R."/>
            <person name="Holmes S.J."/>
            <person name="Howden P.J."/>
            <person name="Howe K.L."/>
            <person name="Howell G.R."/>
            <person name="Huckle E."/>
            <person name="Humphray S.J."/>
            <person name="Humphries M.D."/>
            <person name="Hunt A.R."/>
            <person name="Johnson C.M."/>
            <person name="Joy A.A."/>
            <person name="Kay M."/>
            <person name="Keenan S.J."/>
            <person name="Kimberley A.M."/>
            <person name="King A."/>
            <person name="Laird G.K."/>
            <person name="Langford C."/>
            <person name="Lawlor S."/>
            <person name="Leongamornlert D.A."/>
            <person name="Leversha M."/>
            <person name="Lloyd C.R."/>
            <person name="Lloyd D.M."/>
            <person name="Loveland J.E."/>
            <person name="Lovell J."/>
            <person name="Martin S."/>
            <person name="Mashreghi-Mohammadi M."/>
            <person name="Maslen G.L."/>
            <person name="Matthews L."/>
            <person name="McCann O.T."/>
            <person name="McLaren S.J."/>
            <person name="McLay K."/>
            <person name="McMurray A."/>
            <person name="Moore M.J.F."/>
            <person name="Mullikin J.C."/>
            <person name="Niblett D."/>
            <person name="Nickerson T."/>
            <person name="Novik K.L."/>
            <person name="Oliver K."/>
            <person name="Overton-Larty E.K."/>
            <person name="Parker A."/>
            <person name="Patel R."/>
            <person name="Pearce A.V."/>
            <person name="Peck A.I."/>
            <person name="Phillimore B.J.C.T."/>
            <person name="Phillips S."/>
            <person name="Plumb R.W."/>
            <person name="Porter K.M."/>
            <person name="Ramsey Y."/>
            <person name="Ranby S.A."/>
            <person name="Rice C.M."/>
            <person name="Ross M.T."/>
            <person name="Searle S.M."/>
            <person name="Sehra H.K."/>
            <person name="Sheridan E."/>
            <person name="Skuce C.D."/>
            <person name="Smith S."/>
            <person name="Smith M."/>
            <person name="Spraggon L."/>
            <person name="Squares S.L."/>
            <person name="Steward C.A."/>
            <person name="Sycamore N."/>
            <person name="Tamlyn-Hall G."/>
            <person name="Tester J."/>
            <person name="Theaker A.J."/>
            <person name="Thomas D.W."/>
            <person name="Thorpe A."/>
            <person name="Tracey A."/>
            <person name="Tromans A."/>
            <person name="Tubby B."/>
            <person name="Wall M."/>
            <person name="Wallis J.M."/>
            <person name="West A.P."/>
            <person name="White S.S."/>
            <person name="Whitehead S.L."/>
            <person name="Whittaker H."/>
            <person name="Wild A."/>
            <person name="Willey D.J."/>
            <person name="Wilmer T.E."/>
            <person name="Wood J.M."/>
            <person name="Wray P.W."/>
            <person name="Wyatt J.C."/>
            <person name="Young L."/>
            <person name="Younger R.M."/>
            <person name="Bentley D.R."/>
            <person name="Coulson A."/>
            <person name="Durbin R.M."/>
            <person name="Hubbard T."/>
            <person name="Sulston J.E."/>
            <person name="Dunham I."/>
            <person name="Rogers J."/>
            <person name="Beck S."/>
        </authorList>
    </citation>
    <scope>NUCLEOTIDE SEQUENCE [LARGE SCALE GENOMIC DNA]</scope>
</reference>
<reference key="3">
    <citation type="journal article" date="2004" name="Genome Res.">
        <title>The status, quality, and expansion of the NIH full-length cDNA project: the Mammalian Gene Collection (MGC).</title>
        <authorList>
            <consortium name="The MGC Project Team"/>
        </authorList>
    </citation>
    <scope>NUCLEOTIDE SEQUENCE [LARGE SCALE MRNA]</scope>
    <source>
        <tissue>Placenta</tissue>
    </source>
</reference>
<reference key="4">
    <citation type="journal article" date="2008" name="Proc. Natl. Acad. Sci. U.S.A.">
        <title>A quantitative atlas of mitotic phosphorylation.</title>
        <authorList>
            <person name="Dephoure N."/>
            <person name="Zhou C."/>
            <person name="Villen J."/>
            <person name="Beausoleil S.A."/>
            <person name="Bakalarski C.E."/>
            <person name="Elledge S.J."/>
            <person name="Gygi S.P."/>
        </authorList>
    </citation>
    <scope>PHOSPHORYLATION [LARGE SCALE ANALYSIS] AT SER-264 AND SER-268</scope>
    <scope>IDENTIFICATION BY MASS SPECTROMETRY [LARGE SCALE ANALYSIS]</scope>
    <source>
        <tissue>Cervix carcinoma</tissue>
    </source>
</reference>
<reference key="5">
    <citation type="journal article" date="2009" name="Sci. Signal.">
        <title>Quantitative phosphoproteomic analysis of T cell receptor signaling reveals system-wide modulation of protein-protein interactions.</title>
        <authorList>
            <person name="Mayya V."/>
            <person name="Lundgren D.H."/>
            <person name="Hwang S.-I."/>
            <person name="Rezaul K."/>
            <person name="Wu L."/>
            <person name="Eng J.K."/>
            <person name="Rodionov V."/>
            <person name="Han D.K."/>
        </authorList>
    </citation>
    <scope>PHOSPHORYLATION [LARGE SCALE ANALYSIS] AT SER-264 AND SER-268</scope>
    <scope>IDENTIFICATION BY MASS SPECTROMETRY [LARGE SCALE ANALYSIS]</scope>
    <source>
        <tissue>Leukemic T-cell</tissue>
    </source>
</reference>
<comment type="function">
    <text evidence="3">May play an important role in some human cancers. May be part of the regulatory mechanism in the development of epithelial tube networks such as the circulatory system and lungs.</text>
</comment>
<comment type="tissue specificity">
    <text evidence="2">Expressed in all tissues examined. Highest levels are in the spleen, thymus, peripheral blood and heart. Lowest in the kidney and pancreas.</text>
</comment>
<name>HDC_HUMAN</name>
<gene>
    <name type="primary">HECA</name>
    <name type="synonym">HDC</name>
</gene>
<protein>
    <recommendedName>
        <fullName>Headcase protein homolog</fullName>
        <shortName>hHDC</shortName>
    </recommendedName>
</protein>
<sequence length="543" mass="58837">MPNPKNSKGGRKNKRANSSGDEQENGAGALAAAGAAGAAAGGALAAAAGCGAAAAGAPGAGGAAGAGGAGTGAANAAAAAGAAAAGDAKNEAPCATPLICSFGRPVDLEKDDYQKVVCNNEHCPCSTWMHLQCFYEWESSILVQFNCIGRARSWNEKQCRQNMWTKKGYDLAFRFCSCRCGQGHLKKDTDWYQVKRMQDEKKKKSGSEKNTGRPPGEAAEEAKKCRPPNKPQKGPSHDLPRRHSMDRQNSQEKAVGAAAYGARSPGGSPGQSPPTGYSILSPAHFSGPRSSRYLGEFLKNAIHLEPHKKAMAGGHVFRNAHFDYSPAGLAVHRGGHFDTPVQFLRRLDLSELLTHIPRHKLNTFHVRMEDDAQVGQGEDLRKFILAALSASHRNVVNCALCHRALPVFEQFPLVDGTLFLSPSRHDEIEYDVPCHLQGRLMHLYAVCVDCLEGVHKIICIKCKSRWDGSWHQLGTMYTYDILAASPCCQARLNCKHCGKPVIDVRIGMQYFSEYSNVQQCPHCGNLDYHFVKPFSSFKVLEAY</sequence>
<evidence type="ECO:0000256" key="1">
    <source>
        <dbReference type="SAM" id="MobiDB-lite"/>
    </source>
</evidence>
<evidence type="ECO:0000269" key="2">
    <source>
    </source>
</evidence>
<evidence type="ECO:0000303" key="3">
    <source>
    </source>
</evidence>
<evidence type="ECO:0000305" key="4"/>
<evidence type="ECO:0000312" key="5">
    <source>
        <dbReference type="EMBL" id="CAB94782.1"/>
    </source>
</evidence>
<evidence type="ECO:0007744" key="6">
    <source>
    </source>
</evidence>
<evidence type="ECO:0007744" key="7">
    <source>
    </source>
</evidence>
<organism evidence="5">
    <name type="scientific">Homo sapiens</name>
    <name type="common">Human</name>
    <dbReference type="NCBI Taxonomy" id="9606"/>
    <lineage>
        <taxon>Eukaryota</taxon>
        <taxon>Metazoa</taxon>
        <taxon>Chordata</taxon>
        <taxon>Craniata</taxon>
        <taxon>Vertebrata</taxon>
        <taxon>Euteleostomi</taxon>
        <taxon>Mammalia</taxon>
        <taxon>Eutheria</taxon>
        <taxon>Euarchontoglires</taxon>
        <taxon>Primates</taxon>
        <taxon>Haplorrhini</taxon>
        <taxon>Catarrhini</taxon>
        <taxon>Hominidae</taxon>
        <taxon>Homo</taxon>
    </lineage>
</organism>
<dbReference type="EMBL" id="AB033496">
    <property type="protein sequence ID" value="BAA85333.1"/>
    <property type="molecule type" value="Genomic_DNA"/>
</dbReference>
<dbReference type="EMBL" id="AB033492">
    <property type="protein sequence ID" value="BAA85322.1"/>
    <property type="molecule type" value="mRNA"/>
</dbReference>
<dbReference type="EMBL" id="AL031772">
    <property type="protein sequence ID" value="CAB94782.1"/>
    <property type="molecule type" value="Genomic_DNA"/>
</dbReference>
<dbReference type="EMBL" id="BC070068">
    <property type="protein sequence ID" value="AAH70068.1"/>
    <property type="molecule type" value="mRNA"/>
</dbReference>
<dbReference type="CCDS" id="CCDS5194.1"/>
<dbReference type="RefSeq" id="NP_057301.1">
    <property type="nucleotide sequence ID" value="NM_016217.3"/>
</dbReference>
<dbReference type="BioGRID" id="119682">
    <property type="interactions" value="12"/>
</dbReference>
<dbReference type="FunCoup" id="Q9UBI9">
    <property type="interactions" value="2796"/>
</dbReference>
<dbReference type="IntAct" id="Q9UBI9">
    <property type="interactions" value="1"/>
</dbReference>
<dbReference type="STRING" id="9606.ENSP00000356630"/>
<dbReference type="GlyCosmos" id="Q9UBI9">
    <property type="glycosylation" value="2 sites, 1 glycan"/>
</dbReference>
<dbReference type="GlyGen" id="Q9UBI9">
    <property type="glycosylation" value="2 sites, 1 O-linked glycan (2 sites)"/>
</dbReference>
<dbReference type="iPTMnet" id="Q9UBI9"/>
<dbReference type="PhosphoSitePlus" id="Q9UBI9"/>
<dbReference type="BioMuta" id="HECA"/>
<dbReference type="DMDM" id="44887986"/>
<dbReference type="jPOST" id="Q9UBI9"/>
<dbReference type="MassIVE" id="Q9UBI9"/>
<dbReference type="PaxDb" id="9606-ENSP00000356630"/>
<dbReference type="PeptideAtlas" id="Q9UBI9"/>
<dbReference type="ProteomicsDB" id="83976"/>
<dbReference type="Pumba" id="Q9UBI9"/>
<dbReference type="Antibodypedia" id="33083">
    <property type="antibodies" value="66 antibodies from 14 providers"/>
</dbReference>
<dbReference type="DNASU" id="51696"/>
<dbReference type="Ensembl" id="ENST00000367658.3">
    <property type="protein sequence ID" value="ENSP00000356630.2"/>
    <property type="gene ID" value="ENSG00000112406.5"/>
</dbReference>
<dbReference type="GeneID" id="51696"/>
<dbReference type="KEGG" id="hsa:51696"/>
<dbReference type="MANE-Select" id="ENST00000367658.3">
    <property type="protein sequence ID" value="ENSP00000356630.2"/>
    <property type="RefSeq nucleotide sequence ID" value="NM_016217.3"/>
    <property type="RefSeq protein sequence ID" value="NP_057301.1"/>
</dbReference>
<dbReference type="UCSC" id="uc003qin.4">
    <property type="organism name" value="human"/>
</dbReference>
<dbReference type="AGR" id="HGNC:21041"/>
<dbReference type="CTD" id="51696"/>
<dbReference type="DisGeNET" id="51696"/>
<dbReference type="GeneCards" id="HECA"/>
<dbReference type="HGNC" id="HGNC:21041">
    <property type="gene designation" value="HECA"/>
</dbReference>
<dbReference type="HPA" id="ENSG00000112406">
    <property type="expression patterns" value="Low tissue specificity"/>
</dbReference>
<dbReference type="MIM" id="607977">
    <property type="type" value="gene"/>
</dbReference>
<dbReference type="neXtProt" id="NX_Q9UBI9"/>
<dbReference type="OpenTargets" id="ENSG00000112406"/>
<dbReference type="PharmGKB" id="PA134977625"/>
<dbReference type="VEuPathDB" id="HostDB:ENSG00000112406"/>
<dbReference type="eggNOG" id="KOG3816">
    <property type="taxonomic scope" value="Eukaryota"/>
</dbReference>
<dbReference type="GeneTree" id="ENSGT00500000044928"/>
<dbReference type="HOGENOM" id="CLU_027672_0_0_1"/>
<dbReference type="InParanoid" id="Q9UBI9"/>
<dbReference type="OMA" id="NHDIQRR"/>
<dbReference type="OrthoDB" id="10012848at2759"/>
<dbReference type="PAN-GO" id="Q9UBI9">
    <property type="GO annotations" value="0 GO annotations based on evolutionary models"/>
</dbReference>
<dbReference type="PhylomeDB" id="Q9UBI9"/>
<dbReference type="TreeFam" id="TF315512"/>
<dbReference type="PathwayCommons" id="Q9UBI9"/>
<dbReference type="SignaLink" id="Q9UBI9"/>
<dbReference type="BioGRID-ORCS" id="51696">
    <property type="hits" value="13 hits in 1157 CRISPR screens"/>
</dbReference>
<dbReference type="ChiTaRS" id="HECA">
    <property type="organism name" value="human"/>
</dbReference>
<dbReference type="GenomeRNAi" id="51696"/>
<dbReference type="Pharos" id="Q9UBI9">
    <property type="development level" value="Tbio"/>
</dbReference>
<dbReference type="PRO" id="PR:Q9UBI9"/>
<dbReference type="Proteomes" id="UP000005640">
    <property type="component" value="Chromosome 6"/>
</dbReference>
<dbReference type="RNAct" id="Q9UBI9">
    <property type="molecule type" value="protein"/>
</dbReference>
<dbReference type="Bgee" id="ENSG00000112406">
    <property type="expression patterns" value="Expressed in amniotic fluid and 214 other cell types or tissues"/>
</dbReference>
<dbReference type="GO" id="GO:0005737">
    <property type="term" value="C:cytoplasm"/>
    <property type="evidence" value="ECO:0000314"/>
    <property type="project" value="HGNC"/>
</dbReference>
<dbReference type="GO" id="GO:0016020">
    <property type="term" value="C:membrane"/>
    <property type="evidence" value="ECO:0007005"/>
    <property type="project" value="UniProtKB"/>
</dbReference>
<dbReference type="GO" id="GO:0005634">
    <property type="term" value="C:nucleus"/>
    <property type="evidence" value="ECO:0000314"/>
    <property type="project" value="HGNC"/>
</dbReference>
<dbReference type="GO" id="GO:0045930">
    <property type="term" value="P:negative regulation of mitotic cell cycle"/>
    <property type="evidence" value="ECO:0000314"/>
    <property type="project" value="HGNC"/>
</dbReference>
<dbReference type="GO" id="GO:0030323">
    <property type="term" value="P:respiratory tube development"/>
    <property type="evidence" value="ECO:0000303"/>
    <property type="project" value="UniProtKB"/>
</dbReference>
<dbReference type="InterPro" id="IPR026066">
    <property type="entry name" value="Headcase"/>
</dbReference>
<dbReference type="InterPro" id="IPR031947">
    <property type="entry name" value="Headcase_mid"/>
</dbReference>
<dbReference type="InterPro" id="IPR054537">
    <property type="entry name" value="HECA_N"/>
</dbReference>
<dbReference type="PANTHER" id="PTHR13425">
    <property type="entry name" value="HEADCASE PROTEIN"/>
    <property type="match status" value="1"/>
</dbReference>
<dbReference type="PANTHER" id="PTHR13425:SF3">
    <property type="entry name" value="HEADCASE PROTEIN HOMOLOG"/>
    <property type="match status" value="1"/>
</dbReference>
<dbReference type="Pfam" id="PF16002">
    <property type="entry name" value="Headcase"/>
    <property type="match status" value="1"/>
</dbReference>
<dbReference type="Pfam" id="PF15353">
    <property type="entry name" value="HECA_N"/>
    <property type="match status" value="1"/>
</dbReference>
<feature type="chain" id="PRO_0000083934" description="Headcase protein homolog">
    <location>
        <begin position="1"/>
        <end position="543"/>
    </location>
</feature>
<feature type="region of interest" description="Disordered" evidence="1">
    <location>
        <begin position="1"/>
        <end position="26"/>
    </location>
</feature>
<feature type="region of interest" description="Disordered" evidence="1">
    <location>
        <begin position="197"/>
        <end position="283"/>
    </location>
</feature>
<feature type="compositionally biased region" description="Basic and acidic residues" evidence="1">
    <location>
        <begin position="197"/>
        <end position="211"/>
    </location>
</feature>
<feature type="compositionally biased region" description="Basic and acidic residues" evidence="1">
    <location>
        <begin position="235"/>
        <end position="250"/>
    </location>
</feature>
<feature type="modified residue" description="Phosphoserine" evidence="6 7">
    <location>
        <position position="264"/>
    </location>
</feature>
<feature type="modified residue" description="Phosphoserine" evidence="6 7">
    <location>
        <position position="268"/>
    </location>
</feature>